<comment type="function">
    <text evidence="1">Catalyzes the first step in hexosamine metabolism, converting fructose-6P into glucosamine-6P using glutamine as a nitrogen source.</text>
</comment>
<comment type="catalytic activity">
    <reaction evidence="1">
        <text>D-fructose 6-phosphate + L-glutamine = D-glucosamine 6-phosphate + L-glutamate</text>
        <dbReference type="Rhea" id="RHEA:13237"/>
        <dbReference type="ChEBI" id="CHEBI:29985"/>
        <dbReference type="ChEBI" id="CHEBI:58359"/>
        <dbReference type="ChEBI" id="CHEBI:58725"/>
        <dbReference type="ChEBI" id="CHEBI:61527"/>
        <dbReference type="EC" id="2.6.1.16"/>
    </reaction>
</comment>
<comment type="subunit">
    <text evidence="1">Homodimer.</text>
</comment>
<comment type="subcellular location">
    <subcellularLocation>
        <location evidence="1">Cytoplasm</location>
    </subcellularLocation>
</comment>
<dbReference type="EC" id="2.6.1.16" evidence="1"/>
<dbReference type="EMBL" id="AE000512">
    <property type="protein sequence ID" value="AAD35241.1"/>
    <property type="molecule type" value="Genomic_DNA"/>
</dbReference>
<dbReference type="PIR" id="B72412">
    <property type="entry name" value="B72412"/>
</dbReference>
<dbReference type="RefSeq" id="NP_227963.1">
    <property type="nucleotide sequence ID" value="NC_000853.1"/>
</dbReference>
<dbReference type="RefSeq" id="WP_004082756.1">
    <property type="nucleotide sequence ID" value="NZ_CP011107.1"/>
</dbReference>
<dbReference type="SMR" id="Q9WXZ5"/>
<dbReference type="FunCoup" id="Q9WXZ5">
    <property type="interactions" value="256"/>
</dbReference>
<dbReference type="STRING" id="243274.TM_0148"/>
<dbReference type="PaxDb" id="243274-THEMA_04060"/>
<dbReference type="EnsemblBacteria" id="AAD35241">
    <property type="protein sequence ID" value="AAD35241"/>
    <property type="gene ID" value="TM_0148"/>
</dbReference>
<dbReference type="KEGG" id="tma:TM0148"/>
<dbReference type="KEGG" id="tmi:THEMA_04060"/>
<dbReference type="KEGG" id="tmm:Tmari_0146"/>
<dbReference type="KEGG" id="tmw:THMA_0144"/>
<dbReference type="eggNOG" id="COG0449">
    <property type="taxonomic scope" value="Bacteria"/>
</dbReference>
<dbReference type="InParanoid" id="Q9WXZ5"/>
<dbReference type="OrthoDB" id="106547at2"/>
<dbReference type="Proteomes" id="UP000008183">
    <property type="component" value="Chromosome"/>
</dbReference>
<dbReference type="GO" id="GO:0005829">
    <property type="term" value="C:cytosol"/>
    <property type="evidence" value="ECO:0000318"/>
    <property type="project" value="GO_Central"/>
</dbReference>
<dbReference type="GO" id="GO:0097367">
    <property type="term" value="F:carbohydrate derivative binding"/>
    <property type="evidence" value="ECO:0007669"/>
    <property type="project" value="InterPro"/>
</dbReference>
<dbReference type="GO" id="GO:0004360">
    <property type="term" value="F:glutamine-fructose-6-phosphate transaminase (isomerizing) activity"/>
    <property type="evidence" value="ECO:0000318"/>
    <property type="project" value="GO_Central"/>
</dbReference>
<dbReference type="GO" id="GO:0005975">
    <property type="term" value="P:carbohydrate metabolic process"/>
    <property type="evidence" value="ECO:0007669"/>
    <property type="project" value="UniProtKB-UniRule"/>
</dbReference>
<dbReference type="GO" id="GO:0006002">
    <property type="term" value="P:fructose 6-phosphate metabolic process"/>
    <property type="evidence" value="ECO:0000318"/>
    <property type="project" value="GO_Central"/>
</dbReference>
<dbReference type="GO" id="GO:0006487">
    <property type="term" value="P:protein N-linked glycosylation"/>
    <property type="evidence" value="ECO:0000318"/>
    <property type="project" value="GO_Central"/>
</dbReference>
<dbReference type="GO" id="GO:0006047">
    <property type="term" value="P:UDP-N-acetylglucosamine metabolic process"/>
    <property type="evidence" value="ECO:0000318"/>
    <property type="project" value="GO_Central"/>
</dbReference>
<dbReference type="CDD" id="cd00714">
    <property type="entry name" value="GFAT"/>
    <property type="match status" value="1"/>
</dbReference>
<dbReference type="CDD" id="cd05008">
    <property type="entry name" value="SIS_GlmS_GlmD_1"/>
    <property type="match status" value="1"/>
</dbReference>
<dbReference type="CDD" id="cd05009">
    <property type="entry name" value="SIS_GlmS_GlmD_2"/>
    <property type="match status" value="1"/>
</dbReference>
<dbReference type="FunFam" id="3.40.50.10490:FF:000001">
    <property type="entry name" value="Glutamine--fructose-6-phosphate aminotransferase [isomerizing]"/>
    <property type="match status" value="1"/>
</dbReference>
<dbReference type="FunFam" id="3.40.50.10490:FF:000002">
    <property type="entry name" value="Glutamine--fructose-6-phosphate aminotransferase [isomerizing]"/>
    <property type="match status" value="1"/>
</dbReference>
<dbReference type="FunFam" id="3.60.20.10:FF:000006">
    <property type="entry name" value="Glutamine--fructose-6-phosphate aminotransferase [isomerizing]"/>
    <property type="match status" value="1"/>
</dbReference>
<dbReference type="Gene3D" id="3.40.50.10490">
    <property type="entry name" value="Glucose-6-phosphate isomerase like protein, domain 1"/>
    <property type="match status" value="2"/>
</dbReference>
<dbReference type="Gene3D" id="3.60.20.10">
    <property type="entry name" value="Glutamine Phosphoribosylpyrophosphate, subunit 1, domain 1"/>
    <property type="match status" value="1"/>
</dbReference>
<dbReference type="HAMAP" id="MF_00164">
    <property type="entry name" value="GlmS"/>
    <property type="match status" value="1"/>
</dbReference>
<dbReference type="InterPro" id="IPR017932">
    <property type="entry name" value="GATase_2_dom"/>
</dbReference>
<dbReference type="InterPro" id="IPR005855">
    <property type="entry name" value="GFAT"/>
</dbReference>
<dbReference type="InterPro" id="IPR047084">
    <property type="entry name" value="GFAT_N"/>
</dbReference>
<dbReference type="InterPro" id="IPR035466">
    <property type="entry name" value="GlmS/AgaS_SIS"/>
</dbReference>
<dbReference type="InterPro" id="IPR035490">
    <property type="entry name" value="GlmS/FrlB_SIS"/>
</dbReference>
<dbReference type="InterPro" id="IPR029055">
    <property type="entry name" value="Ntn_hydrolases_N"/>
</dbReference>
<dbReference type="InterPro" id="IPR001347">
    <property type="entry name" value="SIS_dom"/>
</dbReference>
<dbReference type="InterPro" id="IPR046348">
    <property type="entry name" value="SIS_dom_sf"/>
</dbReference>
<dbReference type="NCBIfam" id="TIGR01135">
    <property type="entry name" value="glmS"/>
    <property type="match status" value="1"/>
</dbReference>
<dbReference type="NCBIfam" id="NF001484">
    <property type="entry name" value="PRK00331.1"/>
    <property type="match status" value="1"/>
</dbReference>
<dbReference type="PANTHER" id="PTHR10937">
    <property type="entry name" value="GLUCOSAMINE--FRUCTOSE-6-PHOSPHATE AMINOTRANSFERASE, ISOMERIZING"/>
    <property type="match status" value="1"/>
</dbReference>
<dbReference type="PANTHER" id="PTHR10937:SF0">
    <property type="entry name" value="GLUTAMINE--FRUCTOSE-6-PHOSPHATE TRANSAMINASE (ISOMERIZING)"/>
    <property type="match status" value="1"/>
</dbReference>
<dbReference type="Pfam" id="PF13522">
    <property type="entry name" value="GATase_6"/>
    <property type="match status" value="1"/>
</dbReference>
<dbReference type="Pfam" id="PF01380">
    <property type="entry name" value="SIS"/>
    <property type="match status" value="2"/>
</dbReference>
<dbReference type="SUPFAM" id="SSF56235">
    <property type="entry name" value="N-terminal nucleophile aminohydrolases (Ntn hydrolases)"/>
    <property type="match status" value="1"/>
</dbReference>
<dbReference type="SUPFAM" id="SSF53697">
    <property type="entry name" value="SIS domain"/>
    <property type="match status" value="1"/>
</dbReference>
<dbReference type="PROSITE" id="PS51278">
    <property type="entry name" value="GATASE_TYPE_2"/>
    <property type="match status" value="1"/>
</dbReference>
<dbReference type="PROSITE" id="PS51464">
    <property type="entry name" value="SIS"/>
    <property type="match status" value="2"/>
</dbReference>
<accession>Q9WXZ5</accession>
<reference key="1">
    <citation type="journal article" date="1999" name="Nature">
        <title>Evidence for lateral gene transfer between Archaea and Bacteria from genome sequence of Thermotoga maritima.</title>
        <authorList>
            <person name="Nelson K.E."/>
            <person name="Clayton R.A."/>
            <person name="Gill S.R."/>
            <person name="Gwinn M.L."/>
            <person name="Dodson R.J."/>
            <person name="Haft D.H."/>
            <person name="Hickey E.K."/>
            <person name="Peterson J.D."/>
            <person name="Nelson W.C."/>
            <person name="Ketchum K.A."/>
            <person name="McDonald L.A."/>
            <person name="Utterback T.R."/>
            <person name="Malek J.A."/>
            <person name="Linher K.D."/>
            <person name="Garrett M.M."/>
            <person name="Stewart A.M."/>
            <person name="Cotton M.D."/>
            <person name="Pratt M.S."/>
            <person name="Phillips C.A."/>
            <person name="Richardson D.L."/>
            <person name="Heidelberg J.F."/>
            <person name="Sutton G.G."/>
            <person name="Fleischmann R.D."/>
            <person name="Eisen J.A."/>
            <person name="White O."/>
            <person name="Salzberg S.L."/>
            <person name="Smith H.O."/>
            <person name="Venter J.C."/>
            <person name="Fraser C.M."/>
        </authorList>
    </citation>
    <scope>NUCLEOTIDE SEQUENCE [LARGE SCALE GENOMIC DNA]</scope>
    <source>
        <strain>ATCC 43589 / DSM 3109 / JCM 10099 / NBRC 100826 / MSB8</strain>
    </source>
</reference>
<organism>
    <name type="scientific">Thermotoga maritima (strain ATCC 43589 / DSM 3109 / JCM 10099 / NBRC 100826 / MSB8)</name>
    <dbReference type="NCBI Taxonomy" id="243274"/>
    <lineage>
        <taxon>Bacteria</taxon>
        <taxon>Thermotogati</taxon>
        <taxon>Thermotogota</taxon>
        <taxon>Thermotogae</taxon>
        <taxon>Thermotogales</taxon>
        <taxon>Thermotogaceae</taxon>
        <taxon>Thermotoga</taxon>
    </lineage>
</organism>
<name>GLMS_THEMA</name>
<proteinExistence type="inferred from homology"/>
<evidence type="ECO:0000255" key="1">
    <source>
        <dbReference type="HAMAP-Rule" id="MF_00164"/>
    </source>
</evidence>
<keyword id="KW-0032">Aminotransferase</keyword>
<keyword id="KW-0963">Cytoplasm</keyword>
<keyword id="KW-0315">Glutamine amidotransferase</keyword>
<keyword id="KW-1185">Reference proteome</keyword>
<keyword id="KW-0677">Repeat</keyword>
<keyword id="KW-0808">Transferase</keyword>
<sequence>MCGIVGMVGENLKLEDLVTSLQKLEYRGYDSAGIAYLGDSFGVYKKKGRIDVLKNGLKQKLNDRFFVGIAHTRWATHGEPNDMNAHPHMDCKEEIAVVHNGIIENYREIREFLEQRGHVFSSETDTEVIAHLVEEEFEGDLLDAVLKAVKKLKGAYAIAVVHKNVPDTIVAARKGSPLVAGIGSGVGILASDVTPLLRFTKDVVFLEDGDVMVLRKDGFEIYNTDGVKQQRRVYHVNWDEKAAEKGGYKHFMYKEIMEDPQALVNALVGRVKNDRPFFEELEYYEELLKNADRIRVVSCGTSYYAGLVFKYFLENHTDIDVEIEVSSEFRYKRPHIKEGDVLIAISQSGETADTLESVRLAKKHGAKIVSIVNVVGSTLDRESDVTLFMNAGPEIGVAATKTYVAELAVLYLLGLKIMEINGYWDREAEEILDKLVRMPELLENVLRKDPQIRELSEKYKDYRNFMYIGRGYGYPTALEGALKLKEITYIHATAYQAGELKHGPIALLDVDFPVFAVMPDDSLFFKTKSNVIESKSRNAPVIVLGTEGNRSLEEITGDIIHVPPTHESLYPLMMAPVIQLFAYHIADLKGLDPDKPRNLAKSVTVE</sequence>
<protein>
    <recommendedName>
        <fullName evidence="1">Glutamine--fructose-6-phosphate aminotransferase [isomerizing]</fullName>
        <ecNumber evidence="1">2.6.1.16</ecNumber>
    </recommendedName>
    <alternativeName>
        <fullName evidence="1">D-fructose-6-phosphate amidotransferase</fullName>
    </alternativeName>
    <alternativeName>
        <fullName evidence="1">GFAT</fullName>
    </alternativeName>
    <alternativeName>
        <fullName evidence="1">Glucosamine-6-phosphate synthase</fullName>
    </alternativeName>
    <alternativeName>
        <fullName evidence="1">Hexosephosphate aminotransferase</fullName>
    </alternativeName>
    <alternativeName>
        <fullName evidence="1">L-glutamine--D-fructose-6-phosphate amidotransferase</fullName>
    </alternativeName>
</protein>
<gene>
    <name evidence="1" type="primary">glmS</name>
    <name type="ordered locus">TM_0148</name>
</gene>
<feature type="initiator methionine" description="Removed" evidence="1">
    <location>
        <position position="1"/>
    </location>
</feature>
<feature type="chain" id="PRO_0000135400" description="Glutamine--fructose-6-phosphate aminotransferase [isomerizing]">
    <location>
        <begin position="2"/>
        <end position="606"/>
    </location>
</feature>
<feature type="domain" description="Glutamine amidotransferase type-2" evidence="1">
    <location>
        <begin position="2"/>
        <end position="217"/>
    </location>
</feature>
<feature type="domain" description="SIS 1" evidence="1">
    <location>
        <begin position="284"/>
        <end position="423"/>
    </location>
</feature>
<feature type="domain" description="SIS 2" evidence="1">
    <location>
        <begin position="455"/>
        <end position="596"/>
    </location>
</feature>
<feature type="active site" description="Nucleophile; for GATase activity" evidence="1">
    <location>
        <position position="2"/>
    </location>
</feature>
<feature type="active site" description="For Fru-6P isomerization activity" evidence="1">
    <location>
        <position position="601"/>
    </location>
</feature>